<comment type="function">
    <text evidence="1">Catalyzes the reduction of the glycolytic intermediate dihydroxyacetone phosphate (DHAP) to sn-glycerol 3-phosphate (G3P), the key precursor for phospholipid synthesis.</text>
</comment>
<comment type="catalytic activity">
    <reaction evidence="1">
        <text>sn-glycerol 3-phosphate + NAD(+) = dihydroxyacetone phosphate + NADH + H(+)</text>
        <dbReference type="Rhea" id="RHEA:11092"/>
        <dbReference type="ChEBI" id="CHEBI:15378"/>
        <dbReference type="ChEBI" id="CHEBI:57540"/>
        <dbReference type="ChEBI" id="CHEBI:57597"/>
        <dbReference type="ChEBI" id="CHEBI:57642"/>
        <dbReference type="ChEBI" id="CHEBI:57945"/>
        <dbReference type="EC" id="1.1.1.94"/>
    </reaction>
    <physiologicalReaction direction="right-to-left" evidence="1">
        <dbReference type="Rhea" id="RHEA:11094"/>
    </physiologicalReaction>
</comment>
<comment type="catalytic activity">
    <reaction evidence="1">
        <text>sn-glycerol 3-phosphate + NADP(+) = dihydroxyacetone phosphate + NADPH + H(+)</text>
        <dbReference type="Rhea" id="RHEA:11096"/>
        <dbReference type="ChEBI" id="CHEBI:15378"/>
        <dbReference type="ChEBI" id="CHEBI:57597"/>
        <dbReference type="ChEBI" id="CHEBI:57642"/>
        <dbReference type="ChEBI" id="CHEBI:57783"/>
        <dbReference type="ChEBI" id="CHEBI:58349"/>
        <dbReference type="EC" id="1.1.1.94"/>
    </reaction>
    <physiologicalReaction direction="right-to-left" evidence="1">
        <dbReference type="Rhea" id="RHEA:11098"/>
    </physiologicalReaction>
</comment>
<comment type="pathway">
    <text evidence="1">Membrane lipid metabolism; glycerophospholipid metabolism.</text>
</comment>
<comment type="subcellular location">
    <subcellularLocation>
        <location evidence="1">Cytoplasm</location>
    </subcellularLocation>
</comment>
<comment type="similarity">
    <text evidence="1">Belongs to the NAD-dependent glycerol-3-phosphate dehydrogenase family.</text>
</comment>
<evidence type="ECO:0000255" key="1">
    <source>
        <dbReference type="HAMAP-Rule" id="MF_00394"/>
    </source>
</evidence>
<dbReference type="EC" id="1.1.1.94" evidence="1"/>
<dbReference type="EMBL" id="AM422018">
    <property type="protein sequence ID" value="CAM12018.1"/>
    <property type="molecule type" value="Genomic_DNA"/>
</dbReference>
<dbReference type="SMR" id="B1VAP5"/>
<dbReference type="STRING" id="59748.PA0684"/>
<dbReference type="KEGG" id="pal:PA0684"/>
<dbReference type="eggNOG" id="COG0240">
    <property type="taxonomic scope" value="Bacteria"/>
</dbReference>
<dbReference type="UniPathway" id="UPA00940"/>
<dbReference type="Proteomes" id="UP000008323">
    <property type="component" value="Chromosome"/>
</dbReference>
<dbReference type="GO" id="GO:0005829">
    <property type="term" value="C:cytosol"/>
    <property type="evidence" value="ECO:0007669"/>
    <property type="project" value="TreeGrafter"/>
</dbReference>
<dbReference type="GO" id="GO:0047952">
    <property type="term" value="F:glycerol-3-phosphate dehydrogenase [NAD(P)+] activity"/>
    <property type="evidence" value="ECO:0007669"/>
    <property type="project" value="UniProtKB-UniRule"/>
</dbReference>
<dbReference type="GO" id="GO:0051287">
    <property type="term" value="F:NAD binding"/>
    <property type="evidence" value="ECO:0007669"/>
    <property type="project" value="InterPro"/>
</dbReference>
<dbReference type="GO" id="GO:0005975">
    <property type="term" value="P:carbohydrate metabolic process"/>
    <property type="evidence" value="ECO:0007669"/>
    <property type="project" value="InterPro"/>
</dbReference>
<dbReference type="GO" id="GO:0046167">
    <property type="term" value="P:glycerol-3-phosphate biosynthetic process"/>
    <property type="evidence" value="ECO:0007669"/>
    <property type="project" value="UniProtKB-UniRule"/>
</dbReference>
<dbReference type="GO" id="GO:0046168">
    <property type="term" value="P:glycerol-3-phosphate catabolic process"/>
    <property type="evidence" value="ECO:0007669"/>
    <property type="project" value="InterPro"/>
</dbReference>
<dbReference type="GO" id="GO:0006650">
    <property type="term" value="P:glycerophospholipid metabolic process"/>
    <property type="evidence" value="ECO:0007669"/>
    <property type="project" value="UniProtKB-UniRule"/>
</dbReference>
<dbReference type="GO" id="GO:0008654">
    <property type="term" value="P:phospholipid biosynthetic process"/>
    <property type="evidence" value="ECO:0007669"/>
    <property type="project" value="UniProtKB-KW"/>
</dbReference>
<dbReference type="Gene3D" id="1.10.1040.10">
    <property type="entry name" value="N-(1-d-carboxylethyl)-l-norvaline Dehydrogenase, domain 2"/>
    <property type="match status" value="1"/>
</dbReference>
<dbReference type="Gene3D" id="3.40.50.720">
    <property type="entry name" value="NAD(P)-binding Rossmann-like Domain"/>
    <property type="match status" value="1"/>
</dbReference>
<dbReference type="HAMAP" id="MF_00394">
    <property type="entry name" value="NAD_Glyc3P_dehydrog"/>
    <property type="match status" value="1"/>
</dbReference>
<dbReference type="InterPro" id="IPR008927">
    <property type="entry name" value="6-PGluconate_DH-like_C_sf"/>
</dbReference>
<dbReference type="InterPro" id="IPR013328">
    <property type="entry name" value="6PGD_dom2"/>
</dbReference>
<dbReference type="InterPro" id="IPR006168">
    <property type="entry name" value="G3P_DH_NAD-dep"/>
</dbReference>
<dbReference type="InterPro" id="IPR006109">
    <property type="entry name" value="G3P_DH_NAD-dep_C"/>
</dbReference>
<dbReference type="InterPro" id="IPR011128">
    <property type="entry name" value="G3P_DH_NAD-dep_N"/>
</dbReference>
<dbReference type="InterPro" id="IPR036291">
    <property type="entry name" value="NAD(P)-bd_dom_sf"/>
</dbReference>
<dbReference type="NCBIfam" id="NF000940">
    <property type="entry name" value="PRK00094.1-2"/>
    <property type="match status" value="1"/>
</dbReference>
<dbReference type="NCBIfam" id="NF000942">
    <property type="entry name" value="PRK00094.1-4"/>
    <property type="match status" value="1"/>
</dbReference>
<dbReference type="PANTHER" id="PTHR11728">
    <property type="entry name" value="GLYCEROL-3-PHOSPHATE DEHYDROGENASE"/>
    <property type="match status" value="1"/>
</dbReference>
<dbReference type="PANTHER" id="PTHR11728:SF1">
    <property type="entry name" value="GLYCEROL-3-PHOSPHATE DEHYDROGENASE [NAD(+)] 2, CHLOROPLASTIC"/>
    <property type="match status" value="1"/>
</dbReference>
<dbReference type="Pfam" id="PF07479">
    <property type="entry name" value="NAD_Gly3P_dh_C"/>
    <property type="match status" value="1"/>
</dbReference>
<dbReference type="Pfam" id="PF01210">
    <property type="entry name" value="NAD_Gly3P_dh_N"/>
    <property type="match status" value="1"/>
</dbReference>
<dbReference type="PIRSF" id="PIRSF000114">
    <property type="entry name" value="Glycerol-3-P_dh"/>
    <property type="match status" value="1"/>
</dbReference>
<dbReference type="PRINTS" id="PR00077">
    <property type="entry name" value="GPDHDRGNASE"/>
</dbReference>
<dbReference type="SUPFAM" id="SSF48179">
    <property type="entry name" value="6-phosphogluconate dehydrogenase C-terminal domain-like"/>
    <property type="match status" value="1"/>
</dbReference>
<dbReference type="SUPFAM" id="SSF51735">
    <property type="entry name" value="NAD(P)-binding Rossmann-fold domains"/>
    <property type="match status" value="1"/>
</dbReference>
<dbReference type="PROSITE" id="PS00957">
    <property type="entry name" value="NAD_G3PDH"/>
    <property type="match status" value="1"/>
</dbReference>
<gene>
    <name evidence="1" type="primary">gpsA</name>
    <name type="ordered locus">PA0684</name>
</gene>
<name>GPDA_PHYAS</name>
<keyword id="KW-0963">Cytoplasm</keyword>
<keyword id="KW-0444">Lipid biosynthesis</keyword>
<keyword id="KW-0443">Lipid metabolism</keyword>
<keyword id="KW-0520">NAD</keyword>
<keyword id="KW-0521">NADP</keyword>
<keyword id="KW-0547">Nucleotide-binding</keyword>
<keyword id="KW-0560">Oxidoreductase</keyword>
<keyword id="KW-0594">Phospholipid biosynthesis</keyword>
<keyword id="KW-1208">Phospholipid metabolism</keyword>
<keyword id="KW-1185">Reference proteome</keyword>
<feature type="chain" id="PRO_1000123170" description="Glycerol-3-phosphate dehydrogenase [NAD(P)+]">
    <location>
        <begin position="1"/>
        <end position="329"/>
    </location>
</feature>
<feature type="active site" description="Proton acceptor" evidence="1">
    <location>
        <position position="188"/>
    </location>
</feature>
<feature type="binding site" evidence="1">
    <location>
        <position position="11"/>
    </location>
    <ligand>
        <name>NADPH</name>
        <dbReference type="ChEBI" id="CHEBI:57783"/>
    </ligand>
</feature>
<feature type="binding site" evidence="1">
    <location>
        <position position="101"/>
    </location>
    <ligand>
        <name>NADPH</name>
        <dbReference type="ChEBI" id="CHEBI:57783"/>
    </ligand>
</feature>
<feature type="binding site" evidence="1">
    <location>
        <position position="101"/>
    </location>
    <ligand>
        <name>sn-glycerol 3-phosphate</name>
        <dbReference type="ChEBI" id="CHEBI:57597"/>
    </ligand>
</feature>
<feature type="binding site" evidence="1">
    <location>
        <position position="132"/>
    </location>
    <ligand>
        <name>sn-glycerol 3-phosphate</name>
        <dbReference type="ChEBI" id="CHEBI:57597"/>
    </ligand>
</feature>
<feature type="binding site" evidence="1">
    <location>
        <position position="134"/>
    </location>
    <ligand>
        <name>sn-glycerol 3-phosphate</name>
        <dbReference type="ChEBI" id="CHEBI:57597"/>
    </ligand>
</feature>
<feature type="binding site" evidence="1">
    <location>
        <position position="136"/>
    </location>
    <ligand>
        <name>NADPH</name>
        <dbReference type="ChEBI" id="CHEBI:57783"/>
    </ligand>
</feature>
<feature type="binding site" evidence="1">
    <location>
        <position position="188"/>
    </location>
    <ligand>
        <name>sn-glycerol 3-phosphate</name>
        <dbReference type="ChEBI" id="CHEBI:57597"/>
    </ligand>
</feature>
<feature type="binding site" evidence="1">
    <location>
        <position position="241"/>
    </location>
    <ligand>
        <name>sn-glycerol 3-phosphate</name>
        <dbReference type="ChEBI" id="CHEBI:57597"/>
    </ligand>
</feature>
<feature type="binding site" evidence="1">
    <location>
        <position position="251"/>
    </location>
    <ligand>
        <name>sn-glycerol 3-phosphate</name>
        <dbReference type="ChEBI" id="CHEBI:57597"/>
    </ligand>
</feature>
<feature type="binding site" evidence="1">
    <location>
        <position position="252"/>
    </location>
    <ligand>
        <name>NADPH</name>
        <dbReference type="ChEBI" id="CHEBI:57783"/>
    </ligand>
</feature>
<feature type="binding site" evidence="1">
    <location>
        <position position="252"/>
    </location>
    <ligand>
        <name>sn-glycerol 3-phosphate</name>
        <dbReference type="ChEBI" id="CHEBI:57597"/>
    </ligand>
</feature>
<feature type="binding site" evidence="1">
    <location>
        <position position="253"/>
    </location>
    <ligand>
        <name>sn-glycerol 3-phosphate</name>
        <dbReference type="ChEBI" id="CHEBI:57597"/>
    </ligand>
</feature>
<feature type="binding site" evidence="1">
    <location>
        <position position="276"/>
    </location>
    <ligand>
        <name>NADPH</name>
        <dbReference type="ChEBI" id="CHEBI:57783"/>
    </ligand>
</feature>
<feature type="binding site" evidence="1">
    <location>
        <position position="278"/>
    </location>
    <ligand>
        <name>NADPH</name>
        <dbReference type="ChEBI" id="CHEBI:57783"/>
    </ligand>
</feature>
<sequence>MHITIIGGGAWGATLAQVLTDNNHQVLVYDLNKNYINRINQGMHSIFDLPLKNIQSTSDLEISLLYSDLLVLAVPTKAMRQVLQQIALLSKTPKSFVNVSKGIEPSTFFRVSQIVNQIIPPSLLQNYASLMGPSHAEEVILRKVTLLTAASSDLSFATEIQKIFSNPIYLKIYTSSDLVGNEVCSALKNVLALINGILVAKGFGINSQAALISRGIVEMSRLVTFYHGSFKTVLGLPGLGDLIVTAFSTHSRNFSAGQKIGAGKTYEQIMSESDQVIEGFQSLVAFYQLQSKHQLDLPLIKAAYQLIYECRPFELVFDELMQRPFKSDC</sequence>
<proteinExistence type="inferred from homology"/>
<protein>
    <recommendedName>
        <fullName evidence="1">Glycerol-3-phosphate dehydrogenase [NAD(P)+]</fullName>
        <ecNumber evidence="1">1.1.1.94</ecNumber>
    </recommendedName>
    <alternativeName>
        <fullName evidence="1">NAD(P)(+)-dependent glycerol-3-phosphate dehydrogenase</fullName>
    </alternativeName>
    <alternativeName>
        <fullName evidence="1">NAD(P)H-dependent dihydroxyacetone-phosphate reductase</fullName>
    </alternativeName>
</protein>
<accession>B1VAP5</accession>
<reference key="1">
    <citation type="journal article" date="2008" name="J. Bacteriol.">
        <title>Comparative genome analysis of 'Candidatus Phytoplasma australiense' (subgroup tuf-Australia I; rp-A) and 'Ca. Phytoplasma asteris' strains OY-M and AY-WB.</title>
        <authorList>
            <person name="Tran-Nguyen L.T."/>
            <person name="Kube M."/>
            <person name="Schneider B."/>
            <person name="Reinhardt R."/>
            <person name="Gibb K.S."/>
        </authorList>
    </citation>
    <scope>NUCLEOTIDE SEQUENCE [LARGE SCALE GENOMIC DNA]</scope>
</reference>
<organism>
    <name type="scientific">Phytoplasma australiense</name>
    <dbReference type="NCBI Taxonomy" id="59748"/>
    <lineage>
        <taxon>Bacteria</taxon>
        <taxon>Bacillati</taxon>
        <taxon>Mycoplasmatota</taxon>
        <taxon>Mollicutes</taxon>
        <taxon>Acholeplasmatales</taxon>
        <taxon>Acholeplasmataceae</taxon>
        <taxon>Candidatus Phytoplasma</taxon>
        <taxon>16SrXII (Stolbur group)</taxon>
    </lineage>
</organism>